<sequence>MDNLQSNIFVAGQRLNDLTGYSSIEALKKDIHTQEERLRAARLRVREAKDAYAAAINNRSTSQREVNELLQRKHAWSASDLERFTHLYRNDHTNEVAENEAQEALSAAERESEEAAAQLNKSILSRYHEEQVWSDKIRRMSTWGTWGLMGVNVLLFLIFQIAVEPWRRKRLVKGFEEKVIEAIEKEKAMHHVEILAPVNAAQEIPAAPSADSSAPVVAAVPSPAAEETASNAISTEVLDVPDSATPAPDTTTTPNSQNSLNDLLESAKLQLSRFPPPTSVESWRQYISDLFSDRNLVITQRDLSSLALQSAAAGAAIMGLVIALIRPR</sequence>
<organism>
    <name type="scientific">Aspergillus oryzae (strain ATCC 42149 / RIB 40)</name>
    <name type="common">Yellow koji mold</name>
    <dbReference type="NCBI Taxonomy" id="510516"/>
    <lineage>
        <taxon>Eukaryota</taxon>
        <taxon>Fungi</taxon>
        <taxon>Dikarya</taxon>
        <taxon>Ascomycota</taxon>
        <taxon>Pezizomycotina</taxon>
        <taxon>Eurotiomycetes</taxon>
        <taxon>Eurotiomycetidae</taxon>
        <taxon>Eurotiales</taxon>
        <taxon>Aspergillaceae</taxon>
        <taxon>Aspergillus</taxon>
        <taxon>Aspergillus subgen. Circumdati</taxon>
    </lineage>
</organism>
<proteinExistence type="inferred from homology"/>
<keyword id="KW-0175">Coiled coil</keyword>
<keyword id="KW-0472">Membrane</keyword>
<keyword id="KW-0496">Mitochondrion</keyword>
<keyword id="KW-0999">Mitochondrion inner membrane</keyword>
<keyword id="KW-1185">Reference proteome</keyword>
<keyword id="KW-0809">Transit peptide</keyword>
<keyword id="KW-0812">Transmembrane</keyword>
<keyword id="KW-1133">Transmembrane helix</keyword>
<dbReference type="EMBL" id="BA000056">
    <property type="protein sequence ID" value="BAE66328.1"/>
    <property type="molecule type" value="Genomic_DNA"/>
</dbReference>
<dbReference type="SMR" id="Q2TWP5"/>
<dbReference type="EnsemblFungi" id="BAE66328">
    <property type="protein sequence ID" value="BAE66328"/>
    <property type="gene ID" value="AO090010000476"/>
</dbReference>
<dbReference type="HOGENOM" id="CLU_025632_2_2_1"/>
<dbReference type="OMA" id="ERYMALI"/>
<dbReference type="Proteomes" id="UP000006564">
    <property type="component" value="Chromosome 8"/>
</dbReference>
<dbReference type="GO" id="GO:0005743">
    <property type="term" value="C:mitochondrial inner membrane"/>
    <property type="evidence" value="ECO:0007669"/>
    <property type="project" value="UniProtKB-SubCell"/>
</dbReference>
<dbReference type="GO" id="GO:0007007">
    <property type="term" value="P:inner mitochondrial membrane organization"/>
    <property type="evidence" value="ECO:0007669"/>
    <property type="project" value="TreeGrafter"/>
</dbReference>
<dbReference type="InterPro" id="IPR008839">
    <property type="entry name" value="MDM33_fungi"/>
</dbReference>
<dbReference type="PANTHER" id="PTHR31961">
    <property type="entry name" value="SENSITIVE TO HIGH EXPRESSION PROTEIN 9, MITOCHONDRIAL"/>
    <property type="match status" value="1"/>
</dbReference>
<dbReference type="PANTHER" id="PTHR31961:SF3">
    <property type="entry name" value="SENSITIVE TO HIGH EXPRESSION PROTEIN 9, MITOCHONDRIAL"/>
    <property type="match status" value="1"/>
</dbReference>
<dbReference type="Pfam" id="PF05546">
    <property type="entry name" value="She9_MDM33"/>
    <property type="match status" value="1"/>
</dbReference>
<protein>
    <recommendedName>
        <fullName>Sensitive to high expression protein 9 homolog, mitochondrial</fullName>
    </recommendedName>
</protein>
<comment type="function">
    <text evidence="1">Required for the maintenance of the structure of the mitochondrial inner membrane. Involved in mitochondrial morphology. Causes growth arrest when highly overexpressed (By similarity).</text>
</comment>
<comment type="subunit">
    <text evidence="1">Homooligomer.</text>
</comment>
<comment type="subcellular location">
    <subcellularLocation>
        <location evidence="1">Mitochondrion inner membrane</location>
        <topology evidence="1">Multi-pass membrane protein</topology>
    </subcellularLocation>
</comment>
<comment type="similarity">
    <text evidence="4">Belongs to the SHE9 family.</text>
</comment>
<feature type="transit peptide" description="Mitochondrion" evidence="2">
    <location>
        <begin position="1"/>
        <end status="unknown"/>
    </location>
</feature>
<feature type="chain" id="PRO_0000351050" description="Sensitive to high expression protein 9 homolog, mitochondrial">
    <location>
        <begin status="unknown"/>
        <end position="328"/>
    </location>
</feature>
<feature type="topological domain" description="Mitochondrial matrix" evidence="2">
    <location>
        <begin status="unknown"/>
        <end position="142"/>
    </location>
</feature>
<feature type="transmembrane region" description="Helical" evidence="2">
    <location>
        <begin position="143"/>
        <end position="163"/>
    </location>
</feature>
<feature type="topological domain" description="Mitochondrial intermembrane" evidence="2">
    <location>
        <begin position="164"/>
        <end position="304"/>
    </location>
</feature>
<feature type="transmembrane region" description="Helical" evidence="2">
    <location>
        <begin position="305"/>
        <end position="325"/>
    </location>
</feature>
<feature type="topological domain" description="Mitochondrial matrix" evidence="2">
    <location>
        <begin position="326"/>
        <end position="328"/>
    </location>
</feature>
<feature type="region of interest" description="Disordered" evidence="3">
    <location>
        <begin position="225"/>
        <end position="259"/>
    </location>
</feature>
<feature type="coiled-coil region" evidence="2">
    <location>
        <begin position="21"/>
        <end position="123"/>
    </location>
</feature>
<feature type="compositionally biased region" description="Low complexity" evidence="3">
    <location>
        <begin position="241"/>
        <end position="254"/>
    </location>
</feature>
<reference key="1">
    <citation type="journal article" date="2005" name="Nature">
        <title>Genome sequencing and analysis of Aspergillus oryzae.</title>
        <authorList>
            <person name="Machida M."/>
            <person name="Asai K."/>
            <person name="Sano M."/>
            <person name="Tanaka T."/>
            <person name="Kumagai T."/>
            <person name="Terai G."/>
            <person name="Kusumoto K."/>
            <person name="Arima T."/>
            <person name="Akita O."/>
            <person name="Kashiwagi Y."/>
            <person name="Abe K."/>
            <person name="Gomi K."/>
            <person name="Horiuchi H."/>
            <person name="Kitamoto K."/>
            <person name="Kobayashi T."/>
            <person name="Takeuchi M."/>
            <person name="Denning D.W."/>
            <person name="Galagan J.E."/>
            <person name="Nierman W.C."/>
            <person name="Yu J."/>
            <person name="Archer D.B."/>
            <person name="Bennett J.W."/>
            <person name="Bhatnagar D."/>
            <person name="Cleveland T.E."/>
            <person name="Fedorova N.D."/>
            <person name="Gotoh O."/>
            <person name="Horikawa H."/>
            <person name="Hosoyama A."/>
            <person name="Ichinomiya M."/>
            <person name="Igarashi R."/>
            <person name="Iwashita K."/>
            <person name="Juvvadi P.R."/>
            <person name="Kato M."/>
            <person name="Kato Y."/>
            <person name="Kin T."/>
            <person name="Kokubun A."/>
            <person name="Maeda H."/>
            <person name="Maeyama N."/>
            <person name="Maruyama J."/>
            <person name="Nagasaki H."/>
            <person name="Nakajima T."/>
            <person name="Oda K."/>
            <person name="Okada K."/>
            <person name="Paulsen I."/>
            <person name="Sakamoto K."/>
            <person name="Sawano T."/>
            <person name="Takahashi M."/>
            <person name="Takase K."/>
            <person name="Terabayashi Y."/>
            <person name="Wortman J.R."/>
            <person name="Yamada O."/>
            <person name="Yamagata Y."/>
            <person name="Anazawa H."/>
            <person name="Hata Y."/>
            <person name="Koide Y."/>
            <person name="Komori T."/>
            <person name="Koyama Y."/>
            <person name="Minetoki T."/>
            <person name="Suharnan S."/>
            <person name="Tanaka A."/>
            <person name="Isono K."/>
            <person name="Kuhara S."/>
            <person name="Ogasawara N."/>
            <person name="Kikuchi H."/>
        </authorList>
    </citation>
    <scope>NUCLEOTIDE SEQUENCE [LARGE SCALE GENOMIC DNA]</scope>
    <source>
        <strain>ATCC 42149 / RIB 40</strain>
    </source>
</reference>
<gene>
    <name type="primary">she9</name>
    <name type="ORF">AO090010000476</name>
</gene>
<accession>Q2TWP5</accession>
<name>SHE9_ASPOR</name>
<evidence type="ECO:0000250" key="1"/>
<evidence type="ECO:0000255" key="2"/>
<evidence type="ECO:0000256" key="3">
    <source>
        <dbReference type="SAM" id="MobiDB-lite"/>
    </source>
</evidence>
<evidence type="ECO:0000305" key="4"/>